<keyword id="KW-0349">Heme</keyword>
<keyword id="KW-0408">Iron</keyword>
<keyword id="KW-0472">Membrane</keyword>
<keyword id="KW-0479">Metal-binding</keyword>
<keyword id="KW-0503">Monooxygenase</keyword>
<keyword id="KW-0560">Oxidoreductase</keyword>
<keyword id="KW-1185">Reference proteome</keyword>
<keyword id="KW-0812">Transmembrane</keyword>
<keyword id="KW-1133">Transmembrane helix</keyword>
<sequence length="479" mass="54713">MEPNFYLSLLLLFVTFISLSLFFIFYKQKSPLNLPPGKMGYPIIGESLEFLSTGWKGHPEKFIFDRMRKYSSELFKTSIVGESTVVCCGAASNKFLFSNENKLVTAWWPDSVNKIFPTTSLDSNLKEESIKMRKLLPQFFKPEALQRYVGVMDVIAQRHFVTHWDNKNEITVYPLAKRYTFLLACRLFMSVEDENHVAKFSDPFQLIAAGIISLPIDLPGTPFNKAIKASNFIRKELIKIIKQRRVDLAEGTASPTQDILSHMLLTSDENGKSMNELNIADKILGLLIGGHDTASVACTFLVKYLGELPHIYDKVYQEQMEIAKSKPAGELLNWDDLKKMKYSWNVACEVMRLSPPLQGGFREAITDFMFNGFSIPKGWKLYWSANSTHKNAECFPMPEKFDPTRFEGNGPAPYTFVPFGGGPRMCPGKEYARLEILVFMHNLVKRFKWEKVIPDEKIIVDPFPIPAKDLPIRLYPHKA</sequence>
<name>C7A12_MEDTR</name>
<evidence type="ECO:0000250" key="1">
    <source>
        <dbReference type="UniProtKB" id="Q96242"/>
    </source>
</evidence>
<evidence type="ECO:0000255" key="2"/>
<evidence type="ECO:0000269" key="3">
    <source>
    </source>
</evidence>
<evidence type="ECO:0000269" key="4">
    <source>
    </source>
</evidence>
<evidence type="ECO:0000269" key="5">
    <source>
    </source>
</evidence>
<evidence type="ECO:0000303" key="6">
    <source>
    </source>
</evidence>
<evidence type="ECO:0000303" key="7">
    <source>
    </source>
</evidence>
<evidence type="ECO:0000305" key="8"/>
<evidence type="ECO:0000312" key="9">
    <source>
        <dbReference type="EMBL" id="KEH21305.1"/>
    </source>
</evidence>
<reference key="1">
    <citation type="journal article" date="2007" name="Planta">
        <title>Genome-wide identification and characterization of putative cytochrome P450 genes in the model legume Medicago truncatula.</title>
        <authorList>
            <person name="Li L."/>
            <person name="Cheng H."/>
            <person name="Gai J."/>
            <person name="Yu D."/>
        </authorList>
    </citation>
    <scope>NUCLEOTIDE SEQUENCE [MRNA]</scope>
    <source>
        <strain>cv. Jemalong</strain>
    </source>
</reference>
<reference key="2">
    <citation type="journal article" date="2011" name="Plant Cell">
        <title>Medicago truncatula CYP716A12 is a multifunctional oxidase involved in the biosynthesis of hemolytic saponins.</title>
        <authorList>
            <person name="Carelli M."/>
            <person name="Biazzi E."/>
            <person name="Panara F."/>
            <person name="Tava A."/>
            <person name="Scaramelli L."/>
            <person name="Porceddu A."/>
            <person name="Graham N."/>
            <person name="Odoardi M."/>
            <person name="Piano E."/>
            <person name="Arcioni S."/>
            <person name="May S."/>
            <person name="Scotti C."/>
            <person name="Calderini O."/>
        </authorList>
    </citation>
    <scope>NUCLEOTIDE SEQUENCE [GENOMIC DNA / MRNA]</scope>
    <scope>FUNCTION</scope>
    <scope>CATALYTIC ACTIVITY</scope>
    <scope>TISSUE SPECIFICITY</scope>
    <scope>DISRUPTION PHENOTYPE</scope>
    <scope>MUTAGENESIS OF PRO-355</scope>
    <source>
        <strain>cv. R108</strain>
    </source>
</reference>
<reference key="3">
    <citation type="submission" date="2012-05" db="EMBL/GenBank/DDBJ databases">
        <title>Medicago truncatula cytochrome P450 monooxygenase CYP716A12 mRNA.</title>
        <authorList>
            <person name="Krishnakumar V."/>
            <person name="Cheung F."/>
            <person name="Xiao Y."/>
            <person name="Chan A."/>
            <person name="Moskal W.A."/>
            <person name="Town C.D."/>
        </authorList>
    </citation>
    <scope>NUCLEOTIDE SEQUENCE [MRNA]</scope>
</reference>
<reference key="4">
    <citation type="journal article" date="2011" name="Nature">
        <title>The Medicago genome provides insight into the evolution of rhizobial symbioses.</title>
        <authorList>
            <person name="Young N.D."/>
            <person name="Debelle F."/>
            <person name="Oldroyd G.E.D."/>
            <person name="Geurts R."/>
            <person name="Cannon S.B."/>
            <person name="Udvardi M.K."/>
            <person name="Benedito V.A."/>
            <person name="Mayer K.F.X."/>
            <person name="Gouzy J."/>
            <person name="Schoof H."/>
            <person name="Van de Peer Y."/>
            <person name="Proost S."/>
            <person name="Cook D.R."/>
            <person name="Meyers B.C."/>
            <person name="Spannagl M."/>
            <person name="Cheung F."/>
            <person name="De Mita S."/>
            <person name="Krishnakumar V."/>
            <person name="Gundlach H."/>
            <person name="Zhou S."/>
            <person name="Mudge J."/>
            <person name="Bharti A.K."/>
            <person name="Murray J.D."/>
            <person name="Naoumkina M.A."/>
            <person name="Rosen B."/>
            <person name="Silverstein K.A.T."/>
            <person name="Tang H."/>
            <person name="Rombauts S."/>
            <person name="Zhao P.X."/>
            <person name="Zhou P."/>
            <person name="Barbe V."/>
            <person name="Bardou P."/>
            <person name="Bechner M."/>
            <person name="Bellec A."/>
            <person name="Berger A."/>
            <person name="Berges H."/>
            <person name="Bidwell S."/>
            <person name="Bisseling T."/>
            <person name="Choisne N."/>
            <person name="Couloux A."/>
            <person name="Denny R."/>
            <person name="Deshpande S."/>
            <person name="Dai X."/>
            <person name="Doyle J.J."/>
            <person name="Dudez A.-M."/>
            <person name="Farmer A.D."/>
            <person name="Fouteau S."/>
            <person name="Franken C."/>
            <person name="Gibelin C."/>
            <person name="Gish J."/>
            <person name="Goldstein S."/>
            <person name="Gonzalez A.J."/>
            <person name="Green P.J."/>
            <person name="Hallab A."/>
            <person name="Hartog M."/>
            <person name="Hua A."/>
            <person name="Humphray S.J."/>
            <person name="Jeong D.-H."/>
            <person name="Jing Y."/>
            <person name="Jocker A."/>
            <person name="Kenton S.M."/>
            <person name="Kim D.-J."/>
            <person name="Klee K."/>
            <person name="Lai H."/>
            <person name="Lang C."/>
            <person name="Lin S."/>
            <person name="Macmil S.L."/>
            <person name="Magdelenat G."/>
            <person name="Matthews L."/>
            <person name="McCorrison J."/>
            <person name="Monaghan E.L."/>
            <person name="Mun J.-H."/>
            <person name="Najar F.Z."/>
            <person name="Nicholson C."/>
            <person name="Noirot C."/>
            <person name="O'Bleness M."/>
            <person name="Paule C.R."/>
            <person name="Poulain J."/>
            <person name="Prion F."/>
            <person name="Qin B."/>
            <person name="Qu C."/>
            <person name="Retzel E.F."/>
            <person name="Riddle C."/>
            <person name="Sallet E."/>
            <person name="Samain S."/>
            <person name="Samson N."/>
            <person name="Sanders I."/>
            <person name="Saurat O."/>
            <person name="Scarpelli C."/>
            <person name="Schiex T."/>
            <person name="Segurens B."/>
            <person name="Severin A.J."/>
            <person name="Sherrier D.J."/>
            <person name="Shi R."/>
            <person name="Sims S."/>
            <person name="Singer S.R."/>
            <person name="Sinharoy S."/>
            <person name="Sterck L."/>
            <person name="Viollet A."/>
            <person name="Wang B.-B."/>
            <person name="Wang K."/>
            <person name="Wang M."/>
            <person name="Wang X."/>
            <person name="Warfsmann J."/>
            <person name="Weissenbach J."/>
            <person name="White D.D."/>
            <person name="White J.D."/>
            <person name="Wiley G.B."/>
            <person name="Wincker P."/>
            <person name="Xing Y."/>
            <person name="Yang L."/>
            <person name="Yao Z."/>
            <person name="Ying F."/>
            <person name="Zhai J."/>
            <person name="Zhou L."/>
            <person name="Zuber A."/>
            <person name="Denarie J."/>
            <person name="Dixon R.A."/>
            <person name="May G.D."/>
            <person name="Schwartz D.C."/>
            <person name="Rogers J."/>
            <person name="Quetier F."/>
            <person name="Town C.D."/>
            <person name="Roe B.A."/>
        </authorList>
    </citation>
    <scope>NUCLEOTIDE SEQUENCE [LARGE SCALE GENOMIC DNA]</scope>
    <source>
        <strain>cv. Jemalong A17</strain>
    </source>
</reference>
<reference key="5">
    <citation type="journal article" date="2014" name="BMC Genomics">
        <title>An improved genome release (version Mt4.0) for the model legume Medicago truncatula.</title>
        <authorList>
            <person name="Tang H."/>
            <person name="Krishnakumar V."/>
            <person name="Bidwell S."/>
            <person name="Rosen B."/>
            <person name="Chan A."/>
            <person name="Zhou S."/>
            <person name="Gentzbittel L."/>
            <person name="Childs K.L."/>
            <person name="Yandell M."/>
            <person name="Gundlach H."/>
            <person name="Mayer K.F."/>
            <person name="Schwartz D.C."/>
            <person name="Town C.D."/>
        </authorList>
    </citation>
    <scope>GENOME REANNOTATION</scope>
    <source>
        <strain>cv. Jemalong A17</strain>
    </source>
</reference>
<reference key="6">
    <citation type="submission" date="2008-12" db="EMBL/GenBank/DDBJ databases">
        <title>Medicago truncatula full length cDNA cloning project.</title>
        <authorList>
            <person name="Moskal W."/>
            <person name="Chan A."/>
            <person name="Cheung F."/>
            <person name="Xiao Y."/>
            <person name="Town C.D."/>
        </authorList>
    </citation>
    <scope>NUCLEOTIDE SEQUENCE [LARGE SCALE MRNA]</scope>
</reference>
<reference key="7">
    <citation type="journal article" date="2011" name="Plant Cell Physiol.">
        <title>CYP716A subfamily members are multifunctional oxidases in triterpenoid biosynthesis.</title>
        <authorList>
            <person name="Fukushima E.O."/>
            <person name="Seki H."/>
            <person name="Ohyama K."/>
            <person name="Ono E."/>
            <person name="Umemoto N."/>
            <person name="Mizutani M."/>
            <person name="Saito K."/>
            <person name="Muranaka T."/>
        </authorList>
    </citation>
    <scope>FUNCTION</scope>
    <scope>CATALYTIC ACTIVITY</scope>
</reference>
<reference key="8">
    <citation type="journal article" date="2013" name="Plant Cell Physiol.">
        <title>Combinatorial biosynthesis of legume natural and rare triterpenoids in engineered yeast.</title>
        <authorList>
            <person name="Fukushima E.O."/>
            <person name="Seki H."/>
            <person name="Sawai S."/>
            <person name="Suzuki M."/>
            <person name="Ohyama K."/>
            <person name="Saito K."/>
            <person name="Muranaka T."/>
        </authorList>
    </citation>
    <scope>FUNCTION</scope>
    <scope>CATALYTIC ACTIVITY</scope>
</reference>
<protein>
    <recommendedName>
        <fullName evidence="8">Beta-amyrin 28-monooxygenase</fullName>
        <ecNumber evidence="3 4 5">1.14.14.126</ecNumber>
    </recommendedName>
    <alternativeName>
        <fullName evidence="8">Beta-amyrin 28-oxidase</fullName>
    </alternativeName>
    <alternativeName>
        <fullName evidence="6">Cytochrome P450 716A12</fullName>
        <shortName evidence="6">MtCYP716A12</shortName>
    </alternativeName>
    <alternativeName>
        <fullName evidence="7">Protein LACKING HEMOLYTIC ACTIVITY</fullName>
    </alternativeName>
</protein>
<gene>
    <name evidence="6" type="primary">CYP716A12</name>
    <name evidence="7" type="synonym">LAH</name>
    <name evidence="9" type="ordered locus">MTR_8g100135</name>
</gene>
<proteinExistence type="evidence at protein level"/>
<accession>Q2MJ20</accession>
<accession>B7FI68</accession>
<accession>F8J4R7</accession>
<accession>I3T3X3</accession>
<dbReference type="EC" id="1.14.14.126" evidence="3 4 5"/>
<dbReference type="EMBL" id="DQ335781">
    <property type="protein sequence ID" value="ABC59076.1"/>
    <property type="molecule type" value="mRNA"/>
</dbReference>
<dbReference type="EMBL" id="FN995112">
    <property type="protein sequence ID" value="CBN88268.1"/>
    <property type="molecule type" value="Genomic_DNA"/>
</dbReference>
<dbReference type="EMBL" id="FN995113">
    <property type="protein sequence ID" value="CBN88269.1"/>
    <property type="molecule type" value="mRNA"/>
</dbReference>
<dbReference type="EMBL" id="BT147421">
    <property type="protein sequence ID" value="AFK47215.1"/>
    <property type="molecule type" value="mRNA"/>
</dbReference>
<dbReference type="EMBL" id="CM001224">
    <property type="protein sequence ID" value="KEH21305.1"/>
    <property type="molecule type" value="Genomic_DNA"/>
</dbReference>
<dbReference type="EMBL" id="BT051785">
    <property type="protein sequence ID" value="ACJ84447.1"/>
    <property type="molecule type" value="mRNA"/>
</dbReference>
<dbReference type="RefSeq" id="XP_013447278.1">
    <property type="nucleotide sequence ID" value="XM_013591824.1"/>
</dbReference>
<dbReference type="SMR" id="Q2MJ20"/>
<dbReference type="STRING" id="3880.Q2MJ20"/>
<dbReference type="EnsemblPlants" id="rna50127">
    <property type="protein sequence ID" value="RHN43531.1"/>
    <property type="gene ID" value="gene50127"/>
</dbReference>
<dbReference type="GeneID" id="25502252"/>
<dbReference type="Gramene" id="rna50127">
    <property type="protein sequence ID" value="RHN43531.1"/>
    <property type="gene ID" value="gene50127"/>
</dbReference>
<dbReference type="KEGG" id="ag:CBN88269"/>
<dbReference type="KEGG" id="mtr:25502252"/>
<dbReference type="HOGENOM" id="CLU_001570_15_5_1"/>
<dbReference type="OrthoDB" id="1372046at2759"/>
<dbReference type="BioCyc" id="MetaCyc:MONOMER-17480"/>
<dbReference type="BRENDA" id="1.14.14.126">
    <property type="organism ID" value="3201"/>
</dbReference>
<dbReference type="Proteomes" id="UP000002051">
    <property type="component" value="Chromosome 8"/>
</dbReference>
<dbReference type="ExpressionAtlas" id="Q2MJ20">
    <property type="expression patterns" value="differential"/>
</dbReference>
<dbReference type="GO" id="GO:0016020">
    <property type="term" value="C:membrane"/>
    <property type="evidence" value="ECO:0007669"/>
    <property type="project" value="UniProtKB-SubCell"/>
</dbReference>
<dbReference type="GO" id="GO:0102373">
    <property type="term" value="F:beta-amyrin 28-monooxygenase activity"/>
    <property type="evidence" value="ECO:0007669"/>
    <property type="project" value="UniProtKB-EC"/>
</dbReference>
<dbReference type="GO" id="GO:0020037">
    <property type="term" value="F:heme binding"/>
    <property type="evidence" value="ECO:0007669"/>
    <property type="project" value="InterPro"/>
</dbReference>
<dbReference type="GO" id="GO:0005506">
    <property type="term" value="F:iron ion binding"/>
    <property type="evidence" value="ECO:0007669"/>
    <property type="project" value="InterPro"/>
</dbReference>
<dbReference type="GO" id="GO:0004497">
    <property type="term" value="F:monooxygenase activity"/>
    <property type="evidence" value="ECO:0000318"/>
    <property type="project" value="GO_Central"/>
</dbReference>
<dbReference type="GO" id="GO:0016709">
    <property type="term" value="F:oxidoreductase activity, acting on paired donors, with incorporation or reduction of molecular oxygen, NAD(P)H as one donor, and incorporation of one atom of oxygen"/>
    <property type="evidence" value="ECO:0000314"/>
    <property type="project" value="UniProtKB"/>
</dbReference>
<dbReference type="GO" id="GO:0016135">
    <property type="term" value="P:saponin biosynthetic process"/>
    <property type="evidence" value="ECO:0000314"/>
    <property type="project" value="UniProtKB"/>
</dbReference>
<dbReference type="CDD" id="cd11043">
    <property type="entry name" value="CYP90-like"/>
    <property type="match status" value="1"/>
</dbReference>
<dbReference type="FunFam" id="1.10.630.10:FF:000022">
    <property type="entry name" value="Taxadiene 5-alpha hydroxylase"/>
    <property type="match status" value="1"/>
</dbReference>
<dbReference type="Gene3D" id="1.10.630.10">
    <property type="entry name" value="Cytochrome P450"/>
    <property type="match status" value="1"/>
</dbReference>
<dbReference type="InterPro" id="IPR001128">
    <property type="entry name" value="Cyt_P450"/>
</dbReference>
<dbReference type="InterPro" id="IPR017972">
    <property type="entry name" value="Cyt_P450_CS"/>
</dbReference>
<dbReference type="InterPro" id="IPR002401">
    <property type="entry name" value="Cyt_P450_E_grp-I"/>
</dbReference>
<dbReference type="InterPro" id="IPR036396">
    <property type="entry name" value="Cyt_P450_sf"/>
</dbReference>
<dbReference type="PANTHER" id="PTHR24286">
    <property type="entry name" value="CYTOCHROME P450 26"/>
    <property type="match status" value="1"/>
</dbReference>
<dbReference type="PANTHER" id="PTHR24286:SF349">
    <property type="entry name" value="CYTOCHROME P450 716A1-RELATED"/>
    <property type="match status" value="1"/>
</dbReference>
<dbReference type="Pfam" id="PF00067">
    <property type="entry name" value="p450"/>
    <property type="match status" value="1"/>
</dbReference>
<dbReference type="PRINTS" id="PR00463">
    <property type="entry name" value="EP450I"/>
</dbReference>
<dbReference type="PRINTS" id="PR00385">
    <property type="entry name" value="P450"/>
</dbReference>
<dbReference type="SUPFAM" id="SSF48264">
    <property type="entry name" value="Cytochrome P450"/>
    <property type="match status" value="1"/>
</dbReference>
<dbReference type="PROSITE" id="PS00086">
    <property type="entry name" value="CYTOCHROME_P450"/>
    <property type="match status" value="1"/>
</dbReference>
<organism>
    <name type="scientific">Medicago truncatula</name>
    <name type="common">Barrel medic</name>
    <name type="synonym">Medicago tribuloides</name>
    <dbReference type="NCBI Taxonomy" id="3880"/>
    <lineage>
        <taxon>Eukaryota</taxon>
        <taxon>Viridiplantae</taxon>
        <taxon>Streptophyta</taxon>
        <taxon>Embryophyta</taxon>
        <taxon>Tracheophyta</taxon>
        <taxon>Spermatophyta</taxon>
        <taxon>Magnoliopsida</taxon>
        <taxon>eudicotyledons</taxon>
        <taxon>Gunneridae</taxon>
        <taxon>Pentapetalae</taxon>
        <taxon>rosids</taxon>
        <taxon>fabids</taxon>
        <taxon>Fabales</taxon>
        <taxon>Fabaceae</taxon>
        <taxon>Papilionoideae</taxon>
        <taxon>50 kb inversion clade</taxon>
        <taxon>NPAAA clade</taxon>
        <taxon>Hologalegina</taxon>
        <taxon>IRL clade</taxon>
        <taxon>Trifolieae</taxon>
        <taxon>Medicago</taxon>
    </lineage>
</organism>
<feature type="chain" id="PRO_0000444124" description="Beta-amyrin 28-monooxygenase">
    <location>
        <begin position="1"/>
        <end position="479"/>
    </location>
</feature>
<feature type="transmembrane region" description="Helical" evidence="2">
    <location>
        <begin position="5"/>
        <end position="25"/>
    </location>
</feature>
<feature type="binding site" description="axial binding residue" evidence="1">
    <location>
        <position position="426"/>
    </location>
    <ligand>
        <name>heme</name>
        <dbReference type="ChEBI" id="CHEBI:30413"/>
    </ligand>
    <ligandPart>
        <name>Fe</name>
        <dbReference type="ChEBI" id="CHEBI:18248"/>
    </ligandPart>
</feature>
<feature type="mutagenesis site" description="Loss of catalytic activity." evidence="3">
    <original>P</original>
    <variation>L</variation>
    <location>
        <position position="355"/>
    </location>
</feature>
<feature type="sequence conflict" description="In Ref. 2; CBN88268/CBN88269." evidence="8" ref="2">
    <original>T</original>
    <variation>S</variation>
    <location>
        <position position="15"/>
    </location>
</feature>
<feature type="sequence conflict" description="In Ref. 3; AFK47215 and 6; ACJ84447." evidence="8" ref="3 6">
    <original>I</original>
    <variation>T</variation>
    <location>
        <position position="170"/>
    </location>
</feature>
<feature type="sequence conflict" description="In Ref. 2; CBN88268/CBN88269." evidence="8" ref="2">
    <original>V</original>
    <variation>I</variation>
    <location>
        <position position="246"/>
    </location>
</feature>
<feature type="sequence conflict" description="In Ref. 6; ACJ84447." evidence="8" ref="6">
    <original>I</original>
    <variation>T</variation>
    <location>
        <position position="288"/>
    </location>
</feature>
<feature type="sequence conflict" description="In Ref. 3; AFK47215 and 6; ACJ84447." evidence="8" ref="3 6">
    <original>V</original>
    <variation>A</variation>
    <location>
        <position position="444"/>
    </location>
</feature>
<comment type="function">
    <text evidence="3 4 5">Catalyzes the carboxylation of beta-amyrin at the C-28 position to form oleanolic acid. Involved in an early step in the hemolytic saponin biosynthetic pathway (PubMed:21821776, PubMed:22039103, PubMed:23378447). Catalyzes the carboxylation of alpha-amyrin and lupeol at the C-28 position to form ursolic acid and betulinic acid respectively (PubMed:22039103).</text>
</comment>
<comment type="catalytic activity">
    <reaction evidence="3 4 5">
        <text>beta-amyrin + 3 reduced [NADPH--hemoprotein reductase] + 3 O2 = oleanolate + 3 oxidized [NADPH--hemoprotein reductase] + 4 H2O + 4 H(+)</text>
        <dbReference type="Rhea" id="RHEA:43068"/>
        <dbReference type="Rhea" id="RHEA-COMP:11964"/>
        <dbReference type="Rhea" id="RHEA-COMP:11965"/>
        <dbReference type="ChEBI" id="CHEBI:10352"/>
        <dbReference type="ChEBI" id="CHEBI:15377"/>
        <dbReference type="ChEBI" id="CHEBI:15378"/>
        <dbReference type="ChEBI" id="CHEBI:15379"/>
        <dbReference type="ChEBI" id="CHEBI:57618"/>
        <dbReference type="ChEBI" id="CHEBI:58210"/>
        <dbReference type="ChEBI" id="CHEBI:82828"/>
        <dbReference type="EC" id="1.14.14.126"/>
    </reaction>
</comment>
<comment type="cofactor">
    <cofactor evidence="1">
        <name>heme</name>
        <dbReference type="ChEBI" id="CHEBI:30413"/>
    </cofactor>
</comment>
<comment type="subcellular location">
    <subcellularLocation>
        <location evidence="2">Membrane</location>
        <topology evidence="2">Single-pass membrane protein</topology>
    </subcellularLocation>
</comment>
<comment type="tissue specificity">
    <text evidence="3">Expressed in roots, nodules and flowers.</text>
</comment>
<comment type="disruption phenotype">
    <text evidence="3">Severe reduction in root and shoot size.</text>
</comment>
<comment type="similarity">
    <text evidence="8">Belongs to the cytochrome P450 family.</text>
</comment>